<protein>
    <recommendedName>
        <fullName>Uncharacterized protein in pdhA 5'region</fullName>
    </recommendedName>
    <alternativeName>
        <fullName>ORF1</fullName>
    </alternativeName>
</protein>
<evidence type="ECO:0000250" key="1"/>
<evidence type="ECO:0000305" key="2"/>
<name>YPDA_GEOSE</name>
<comment type="cofactor">
    <cofactor evidence="1">
        <name>Mg(2+)</name>
        <dbReference type="ChEBI" id="CHEBI:18420"/>
    </cofactor>
</comment>
<comment type="similarity">
    <text evidence="2">Belongs to the HAD-like hydrolase superfamily. Cof family.</text>
</comment>
<dbReference type="EMBL" id="X53560">
    <property type="protein sequence ID" value="CAA37626.1"/>
    <property type="molecule type" value="Genomic_DNA"/>
</dbReference>
<dbReference type="PIR" id="S10796">
    <property type="entry name" value="S10796"/>
</dbReference>
<dbReference type="SMR" id="P21878"/>
<dbReference type="GO" id="GO:0005829">
    <property type="term" value="C:cytosol"/>
    <property type="evidence" value="ECO:0007669"/>
    <property type="project" value="TreeGrafter"/>
</dbReference>
<dbReference type="GO" id="GO:0000287">
    <property type="term" value="F:magnesium ion binding"/>
    <property type="evidence" value="ECO:0007669"/>
    <property type="project" value="TreeGrafter"/>
</dbReference>
<dbReference type="GO" id="GO:0016791">
    <property type="term" value="F:phosphatase activity"/>
    <property type="evidence" value="ECO:0007669"/>
    <property type="project" value="TreeGrafter"/>
</dbReference>
<dbReference type="Gene3D" id="3.40.50.1000">
    <property type="entry name" value="HAD superfamily/HAD-like"/>
    <property type="match status" value="1"/>
</dbReference>
<dbReference type="InterPro" id="IPR036412">
    <property type="entry name" value="HAD-like_sf"/>
</dbReference>
<dbReference type="InterPro" id="IPR023214">
    <property type="entry name" value="HAD_sf"/>
</dbReference>
<dbReference type="PANTHER" id="PTHR10000:SF25">
    <property type="entry name" value="PHOSPHATASE YKRA-RELATED"/>
    <property type="match status" value="1"/>
</dbReference>
<dbReference type="PANTHER" id="PTHR10000">
    <property type="entry name" value="PHOSPHOSERINE PHOSPHATASE"/>
    <property type="match status" value="1"/>
</dbReference>
<dbReference type="Pfam" id="PF08282">
    <property type="entry name" value="Hydrolase_3"/>
    <property type="match status" value="1"/>
</dbReference>
<dbReference type="SUPFAM" id="SSF56784">
    <property type="entry name" value="HAD-like"/>
    <property type="match status" value="1"/>
</dbReference>
<dbReference type="PROSITE" id="PS01229">
    <property type="entry name" value="COF_2"/>
    <property type="match status" value="1"/>
</dbReference>
<keyword id="KW-0460">Magnesium</keyword>
<keyword id="KW-0479">Metal-binding</keyword>
<accession>P21878</accession>
<feature type="chain" id="PRO_0000054444" description="Uncharacterized protein in pdhA 5'region">
    <location>
        <begin position="1" status="less than"/>
        <end position="95"/>
    </location>
</feature>
<feature type="binding site" evidence="1">
    <location>
        <position position="21"/>
    </location>
    <ligand>
        <name>phosphate</name>
        <dbReference type="ChEBI" id="CHEBI:43474"/>
    </ligand>
</feature>
<feature type="binding site" evidence="1">
    <location>
        <position position="44"/>
    </location>
    <ligand>
        <name>Mg(2+)</name>
        <dbReference type="ChEBI" id="CHEBI:18420"/>
    </ligand>
</feature>
<feature type="binding site" evidence="1">
    <location>
        <position position="47"/>
    </location>
    <ligand>
        <name>phosphate</name>
        <dbReference type="ChEBI" id="CHEBI:43474"/>
    </ligand>
</feature>
<feature type="non-terminal residue">
    <location>
        <position position="1"/>
    </location>
</feature>
<organism>
    <name type="scientific">Geobacillus stearothermophilus</name>
    <name type="common">Bacillus stearothermophilus</name>
    <dbReference type="NCBI Taxonomy" id="1422"/>
    <lineage>
        <taxon>Bacteria</taxon>
        <taxon>Bacillati</taxon>
        <taxon>Bacillota</taxon>
        <taxon>Bacilli</taxon>
        <taxon>Bacillales</taxon>
        <taxon>Anoxybacillaceae</taxon>
        <taxon>Geobacillus</taxon>
    </lineage>
</organism>
<proteinExistence type="inferred from homology"/>
<sequence>EFRFVRWHDVSTDVLPAGGSKAEGIRLMIEKLGIDKGDVYAFGDGLNDIEMLSFVGTGVAMGNAHEEVKRVADFVTKPVSEEGIWHGLKQLQLIP</sequence>
<reference key="1">
    <citation type="journal article" date="1990" name="Eur. J. Biochem.">
        <title>Cloning and sequence analysis of the genes encoding the alpha and beta subunits of the E1 component of the pyruvate dehydrogenase multienzyme complex of Bacillus stearothermophilus.</title>
        <authorList>
            <person name="Hawkins C.F."/>
            <person name="Borges A."/>
            <person name="Perham R.N."/>
        </authorList>
    </citation>
    <scope>NUCLEOTIDE SEQUENCE [GENOMIC DNA]</scope>
    <source>
        <strain>ATCC 29609 / DSM 2027 / NCA 1503 / NCIMB 8924</strain>
    </source>
</reference>
<reference key="2">
    <citation type="journal article" date="1990" name="Eur. J. Biochem.">
        <title>Cloning and sequence analysis of the genes encoding the dihydrolipoamide acetyltransferase and dihydrolipoamide dehydrogenase components of the pyruvate dehydrogenase multienzyme complex of Bacillus stearothermophilus.</title>
        <authorList>
            <person name="Borges A."/>
            <person name="Hawkins C.F."/>
            <person name="Packman L.C."/>
            <person name="Perham R.N."/>
        </authorList>
    </citation>
    <scope>NUCLEOTIDE SEQUENCE [GENOMIC DNA]</scope>
</reference>